<organism>
    <name type="scientific">Synechococcus sp. (strain WH7803)</name>
    <dbReference type="NCBI Taxonomy" id="32051"/>
    <lineage>
        <taxon>Bacteria</taxon>
        <taxon>Bacillati</taxon>
        <taxon>Cyanobacteriota</taxon>
        <taxon>Cyanophyceae</taxon>
        <taxon>Synechococcales</taxon>
        <taxon>Synechococcaceae</taxon>
        <taxon>Synechococcus</taxon>
    </lineage>
</organism>
<accession>A5GJT7</accession>
<reference key="1">
    <citation type="submission" date="2006-05" db="EMBL/GenBank/DDBJ databases">
        <authorList>
            <consortium name="Genoscope"/>
        </authorList>
    </citation>
    <scope>NUCLEOTIDE SEQUENCE [LARGE SCALE GENOMIC DNA]</scope>
    <source>
        <strain>WH7803</strain>
    </source>
</reference>
<dbReference type="EC" id="6.1.1.3" evidence="1"/>
<dbReference type="EMBL" id="CT971583">
    <property type="protein sequence ID" value="CAK23202.1"/>
    <property type="molecule type" value="Genomic_DNA"/>
</dbReference>
<dbReference type="SMR" id="A5GJT7"/>
<dbReference type="STRING" id="32051.SynWH7803_0776"/>
<dbReference type="KEGG" id="syx:SynWH7803_0776"/>
<dbReference type="eggNOG" id="COG0441">
    <property type="taxonomic scope" value="Bacteria"/>
</dbReference>
<dbReference type="HOGENOM" id="CLU_008554_0_1_3"/>
<dbReference type="OrthoDB" id="9802304at2"/>
<dbReference type="Proteomes" id="UP000001566">
    <property type="component" value="Chromosome"/>
</dbReference>
<dbReference type="GO" id="GO:0005737">
    <property type="term" value="C:cytoplasm"/>
    <property type="evidence" value="ECO:0007669"/>
    <property type="project" value="UniProtKB-SubCell"/>
</dbReference>
<dbReference type="GO" id="GO:0005524">
    <property type="term" value="F:ATP binding"/>
    <property type="evidence" value="ECO:0007669"/>
    <property type="project" value="UniProtKB-UniRule"/>
</dbReference>
<dbReference type="GO" id="GO:0046872">
    <property type="term" value="F:metal ion binding"/>
    <property type="evidence" value="ECO:0007669"/>
    <property type="project" value="UniProtKB-KW"/>
</dbReference>
<dbReference type="GO" id="GO:0004829">
    <property type="term" value="F:threonine-tRNA ligase activity"/>
    <property type="evidence" value="ECO:0007669"/>
    <property type="project" value="UniProtKB-UniRule"/>
</dbReference>
<dbReference type="GO" id="GO:0000049">
    <property type="term" value="F:tRNA binding"/>
    <property type="evidence" value="ECO:0007669"/>
    <property type="project" value="UniProtKB-KW"/>
</dbReference>
<dbReference type="GO" id="GO:0006435">
    <property type="term" value="P:threonyl-tRNA aminoacylation"/>
    <property type="evidence" value="ECO:0007669"/>
    <property type="project" value="UniProtKB-UniRule"/>
</dbReference>
<dbReference type="CDD" id="cd00860">
    <property type="entry name" value="ThrRS_anticodon"/>
    <property type="match status" value="1"/>
</dbReference>
<dbReference type="CDD" id="cd00771">
    <property type="entry name" value="ThrRS_core"/>
    <property type="match status" value="1"/>
</dbReference>
<dbReference type="FunFam" id="3.30.54.20:FF:000002">
    <property type="entry name" value="Threonine--tRNA ligase"/>
    <property type="match status" value="1"/>
</dbReference>
<dbReference type="FunFam" id="3.30.930.10:FF:000002">
    <property type="entry name" value="Threonine--tRNA ligase"/>
    <property type="match status" value="1"/>
</dbReference>
<dbReference type="FunFam" id="3.40.50.800:FF:000001">
    <property type="entry name" value="Threonine--tRNA ligase"/>
    <property type="match status" value="1"/>
</dbReference>
<dbReference type="Gene3D" id="3.30.54.20">
    <property type="match status" value="1"/>
</dbReference>
<dbReference type="Gene3D" id="3.40.50.800">
    <property type="entry name" value="Anticodon-binding domain"/>
    <property type="match status" value="1"/>
</dbReference>
<dbReference type="Gene3D" id="3.30.930.10">
    <property type="entry name" value="Bira Bifunctional Protein, Domain 2"/>
    <property type="match status" value="1"/>
</dbReference>
<dbReference type="Gene3D" id="3.30.980.10">
    <property type="entry name" value="Threonyl-trna Synthetase, Chain A, domain 2"/>
    <property type="match status" value="1"/>
</dbReference>
<dbReference type="HAMAP" id="MF_00184">
    <property type="entry name" value="Thr_tRNA_synth"/>
    <property type="match status" value="1"/>
</dbReference>
<dbReference type="InterPro" id="IPR002314">
    <property type="entry name" value="aa-tRNA-synt_IIb"/>
</dbReference>
<dbReference type="InterPro" id="IPR006195">
    <property type="entry name" value="aa-tRNA-synth_II"/>
</dbReference>
<dbReference type="InterPro" id="IPR045864">
    <property type="entry name" value="aa-tRNA-synth_II/BPL/LPL"/>
</dbReference>
<dbReference type="InterPro" id="IPR004154">
    <property type="entry name" value="Anticodon-bd"/>
</dbReference>
<dbReference type="InterPro" id="IPR036621">
    <property type="entry name" value="Anticodon-bd_dom_sf"/>
</dbReference>
<dbReference type="InterPro" id="IPR002320">
    <property type="entry name" value="Thr-tRNA-ligase_IIa"/>
</dbReference>
<dbReference type="InterPro" id="IPR018163">
    <property type="entry name" value="Thr/Ala-tRNA-synth_IIc_edit"/>
</dbReference>
<dbReference type="InterPro" id="IPR047246">
    <property type="entry name" value="ThrRS_anticodon"/>
</dbReference>
<dbReference type="InterPro" id="IPR033728">
    <property type="entry name" value="ThrRS_core"/>
</dbReference>
<dbReference type="InterPro" id="IPR012947">
    <property type="entry name" value="tRNA_SAD"/>
</dbReference>
<dbReference type="NCBIfam" id="TIGR00418">
    <property type="entry name" value="thrS"/>
    <property type="match status" value="1"/>
</dbReference>
<dbReference type="PANTHER" id="PTHR11451:SF44">
    <property type="entry name" value="THREONINE--TRNA LIGASE, CHLOROPLASTIC_MITOCHONDRIAL 2"/>
    <property type="match status" value="1"/>
</dbReference>
<dbReference type="PANTHER" id="PTHR11451">
    <property type="entry name" value="THREONINE-TRNA LIGASE"/>
    <property type="match status" value="1"/>
</dbReference>
<dbReference type="Pfam" id="PF03129">
    <property type="entry name" value="HGTP_anticodon"/>
    <property type="match status" value="1"/>
</dbReference>
<dbReference type="Pfam" id="PF00587">
    <property type="entry name" value="tRNA-synt_2b"/>
    <property type="match status" value="1"/>
</dbReference>
<dbReference type="Pfam" id="PF07973">
    <property type="entry name" value="tRNA_SAD"/>
    <property type="match status" value="1"/>
</dbReference>
<dbReference type="PRINTS" id="PR01047">
    <property type="entry name" value="TRNASYNTHTHR"/>
</dbReference>
<dbReference type="SMART" id="SM00863">
    <property type="entry name" value="tRNA_SAD"/>
    <property type="match status" value="1"/>
</dbReference>
<dbReference type="SUPFAM" id="SSF52954">
    <property type="entry name" value="Class II aaRS ABD-related"/>
    <property type="match status" value="1"/>
</dbReference>
<dbReference type="SUPFAM" id="SSF55681">
    <property type="entry name" value="Class II aaRS and biotin synthetases"/>
    <property type="match status" value="1"/>
</dbReference>
<dbReference type="SUPFAM" id="SSF55186">
    <property type="entry name" value="ThrRS/AlaRS common domain"/>
    <property type="match status" value="1"/>
</dbReference>
<dbReference type="PROSITE" id="PS50862">
    <property type="entry name" value="AA_TRNA_LIGASE_II"/>
    <property type="match status" value="1"/>
</dbReference>
<name>SYT_SYNPW</name>
<gene>
    <name evidence="1" type="primary">thrS</name>
    <name type="ordered locus">SynWH7803_0776</name>
</gene>
<comment type="function">
    <text evidence="1">Catalyzes the attachment of threonine to tRNA(Thr) in a two-step reaction: L-threonine is first activated by ATP to form Thr-AMP and then transferred to the acceptor end of tRNA(Thr). Also edits incorrectly charged L-seryl-tRNA(Thr).</text>
</comment>
<comment type="catalytic activity">
    <reaction evidence="1">
        <text>tRNA(Thr) + L-threonine + ATP = L-threonyl-tRNA(Thr) + AMP + diphosphate + H(+)</text>
        <dbReference type="Rhea" id="RHEA:24624"/>
        <dbReference type="Rhea" id="RHEA-COMP:9670"/>
        <dbReference type="Rhea" id="RHEA-COMP:9704"/>
        <dbReference type="ChEBI" id="CHEBI:15378"/>
        <dbReference type="ChEBI" id="CHEBI:30616"/>
        <dbReference type="ChEBI" id="CHEBI:33019"/>
        <dbReference type="ChEBI" id="CHEBI:57926"/>
        <dbReference type="ChEBI" id="CHEBI:78442"/>
        <dbReference type="ChEBI" id="CHEBI:78534"/>
        <dbReference type="ChEBI" id="CHEBI:456215"/>
        <dbReference type="EC" id="6.1.1.3"/>
    </reaction>
</comment>
<comment type="cofactor">
    <cofactor evidence="1">
        <name>Zn(2+)</name>
        <dbReference type="ChEBI" id="CHEBI:29105"/>
    </cofactor>
    <text evidence="1">Binds 1 zinc ion per subunit.</text>
</comment>
<comment type="subunit">
    <text evidence="1">Homodimer.</text>
</comment>
<comment type="subcellular location">
    <subcellularLocation>
        <location evidence="1">Cytoplasm</location>
    </subcellularLocation>
</comment>
<comment type="similarity">
    <text evidence="1">Belongs to the class-II aminoacyl-tRNA synthetase family.</text>
</comment>
<keyword id="KW-0030">Aminoacyl-tRNA synthetase</keyword>
<keyword id="KW-0067">ATP-binding</keyword>
<keyword id="KW-0963">Cytoplasm</keyword>
<keyword id="KW-0436">Ligase</keyword>
<keyword id="KW-0479">Metal-binding</keyword>
<keyword id="KW-0547">Nucleotide-binding</keyword>
<keyword id="KW-0648">Protein biosynthesis</keyword>
<keyword id="KW-1185">Reference proteome</keyword>
<keyword id="KW-0694">RNA-binding</keyword>
<keyword id="KW-0820">tRNA-binding</keyword>
<keyword id="KW-0862">Zinc</keyword>
<protein>
    <recommendedName>
        <fullName evidence="1">Threonine--tRNA ligase</fullName>
        <ecNumber evidence="1">6.1.1.3</ecNumber>
    </recommendedName>
    <alternativeName>
        <fullName evidence="1">Threonyl-tRNA synthetase</fullName>
        <shortName evidence="1">ThrRS</shortName>
    </alternativeName>
</protein>
<feature type="chain" id="PRO_1000020539" description="Threonine--tRNA ligase">
    <location>
        <begin position="1"/>
        <end position="610"/>
    </location>
</feature>
<feature type="region of interest" description="Disordered" evidence="2">
    <location>
        <begin position="1"/>
        <end position="29"/>
    </location>
</feature>
<feature type="region of interest" description="Catalytic" evidence="1">
    <location>
        <begin position="209"/>
        <end position="502"/>
    </location>
</feature>
<feature type="compositionally biased region" description="Low complexity" evidence="2">
    <location>
        <begin position="8"/>
        <end position="24"/>
    </location>
</feature>
<feature type="binding site" evidence="1">
    <location>
        <position position="302"/>
    </location>
    <ligand>
        <name>Zn(2+)</name>
        <dbReference type="ChEBI" id="CHEBI:29105"/>
    </ligand>
</feature>
<feature type="binding site" evidence="1">
    <location>
        <position position="353"/>
    </location>
    <ligand>
        <name>Zn(2+)</name>
        <dbReference type="ChEBI" id="CHEBI:29105"/>
    </ligand>
</feature>
<feature type="binding site" evidence="1">
    <location>
        <position position="479"/>
    </location>
    <ligand>
        <name>Zn(2+)</name>
        <dbReference type="ChEBI" id="CHEBI:29105"/>
    </ligand>
</feature>
<sequence>MANHDQQTVSSAAATTSASPSPVVLPKTSENEQLLRIRHSMSHVMAMAVQQLFPNARVTIGPWTESGFYYDFDNPEPFTEADLKAIKKGMIKIINKKLPLERVEVSRSEAEEKIKAQNEPYKLEILEGLQEPITLYTLGEDWWDLCAGPHVENTGQLNAKAFELESVAGAYWRGDETKAQLQRIYGTAWETAEQLAEHKRRKEEALRRDHRRIGKDLDLFSIEDEAGAGLVFWHPRGARMRLLIEEFWRQAHFEGGYELLYTPHVADISLWKTSGHLDFYAESMFGPMEVDEREYQLKPMNCPFHVLTYASKLRSYRELPIRWAELGTVYRYERPGVMHGLMRVRGFTQDDAHVFCLPEQISDEILKILDLTERILSTFDFNTYEINLSTRPEKSIGDDAVWDLATKGLIEALERKGWAYKIDEGGGAFYGPKIDLKIEDAIGRMWQCSTIQLDFNLPERFKLDYIAADGSKQRPIMIHRAIFGSLERFFGIMTENYAGDYPLWLAPEQVRLLPVTDEVQPYAESLLDQLTQAGVRATIDRSGDRLGKLIRTGEQMKIPVLAVIGAKEAEQNAVSLRSRRDGDLGVVAVADLLRAAQNANSQRAAGLELN</sequence>
<proteinExistence type="inferred from homology"/>
<evidence type="ECO:0000255" key="1">
    <source>
        <dbReference type="HAMAP-Rule" id="MF_00184"/>
    </source>
</evidence>
<evidence type="ECO:0000256" key="2">
    <source>
        <dbReference type="SAM" id="MobiDB-lite"/>
    </source>
</evidence>